<accession>A6V4E9</accession>
<keyword id="KW-0997">Cell inner membrane</keyword>
<keyword id="KW-1003">Cell membrane</keyword>
<keyword id="KW-0472">Membrane</keyword>
<keyword id="KW-0520">NAD</keyword>
<keyword id="KW-0874">Quinone</keyword>
<keyword id="KW-1278">Translocase</keyword>
<keyword id="KW-0812">Transmembrane</keyword>
<keyword id="KW-1133">Transmembrane helix</keyword>
<keyword id="KW-0813">Transport</keyword>
<keyword id="KW-0830">Ubiquinone</keyword>
<gene>
    <name evidence="1" type="primary">nuoA1</name>
    <name type="ordered locus">PSPA7_2570</name>
</gene>
<dbReference type="EC" id="7.1.1.-" evidence="1"/>
<dbReference type="EMBL" id="CP000744">
    <property type="protein sequence ID" value="ABR82089.1"/>
    <property type="molecule type" value="Genomic_DNA"/>
</dbReference>
<dbReference type="RefSeq" id="WP_012075444.1">
    <property type="nucleotide sequence ID" value="NC_009656.1"/>
</dbReference>
<dbReference type="SMR" id="A6V4E9"/>
<dbReference type="GeneID" id="77220826"/>
<dbReference type="KEGG" id="pap:PSPA7_2570"/>
<dbReference type="HOGENOM" id="CLU_119549_2_1_6"/>
<dbReference type="Proteomes" id="UP000001582">
    <property type="component" value="Chromosome"/>
</dbReference>
<dbReference type="GO" id="GO:0030964">
    <property type="term" value="C:NADH dehydrogenase complex"/>
    <property type="evidence" value="ECO:0007669"/>
    <property type="project" value="TreeGrafter"/>
</dbReference>
<dbReference type="GO" id="GO:0005886">
    <property type="term" value="C:plasma membrane"/>
    <property type="evidence" value="ECO:0007669"/>
    <property type="project" value="UniProtKB-SubCell"/>
</dbReference>
<dbReference type="GO" id="GO:0008137">
    <property type="term" value="F:NADH dehydrogenase (ubiquinone) activity"/>
    <property type="evidence" value="ECO:0007669"/>
    <property type="project" value="InterPro"/>
</dbReference>
<dbReference type="GO" id="GO:0050136">
    <property type="term" value="F:NADH:ubiquinone reductase (non-electrogenic) activity"/>
    <property type="evidence" value="ECO:0007669"/>
    <property type="project" value="UniProtKB-UniRule"/>
</dbReference>
<dbReference type="GO" id="GO:0048038">
    <property type="term" value="F:quinone binding"/>
    <property type="evidence" value="ECO:0007669"/>
    <property type="project" value="UniProtKB-KW"/>
</dbReference>
<dbReference type="FunFam" id="1.20.58.1610:FF:000003">
    <property type="entry name" value="NADH-quinone oxidoreductase subunit A"/>
    <property type="match status" value="1"/>
</dbReference>
<dbReference type="Gene3D" id="1.20.58.1610">
    <property type="entry name" value="NADH:ubiquinone/plastoquinone oxidoreductase, chain 3"/>
    <property type="match status" value="1"/>
</dbReference>
<dbReference type="HAMAP" id="MF_01394">
    <property type="entry name" value="NDH1_NuoA"/>
    <property type="match status" value="1"/>
</dbReference>
<dbReference type="InterPro" id="IPR023043">
    <property type="entry name" value="NAD(P)H_OxRDtase_bac/plastid"/>
</dbReference>
<dbReference type="InterPro" id="IPR000440">
    <property type="entry name" value="NADH_UbQ/plastoQ_OxRdtase_su3"/>
</dbReference>
<dbReference type="InterPro" id="IPR038430">
    <property type="entry name" value="NDAH_ubi_oxred_su3_sf"/>
</dbReference>
<dbReference type="PANTHER" id="PTHR11058:SF21">
    <property type="entry name" value="NADH-QUINONE OXIDOREDUCTASE SUBUNIT A"/>
    <property type="match status" value="1"/>
</dbReference>
<dbReference type="PANTHER" id="PTHR11058">
    <property type="entry name" value="NADH-UBIQUINONE OXIDOREDUCTASE CHAIN 3"/>
    <property type="match status" value="1"/>
</dbReference>
<dbReference type="Pfam" id="PF00507">
    <property type="entry name" value="Oxidored_q4"/>
    <property type="match status" value="1"/>
</dbReference>
<protein>
    <recommendedName>
        <fullName evidence="1">NADH-quinone oxidoreductase subunit A 1</fullName>
        <ecNumber evidence="1">7.1.1.-</ecNumber>
    </recommendedName>
    <alternativeName>
        <fullName evidence="1">NADH dehydrogenase I subunit A 1</fullName>
    </alternativeName>
    <alternativeName>
        <fullName evidence="1">NDH-1 subunit A 1</fullName>
    </alternativeName>
    <alternativeName>
        <fullName evidence="1">NUO1 1</fullName>
    </alternativeName>
</protein>
<name>NUOA1_PSEP7</name>
<comment type="function">
    <text evidence="1">NDH-1 shuttles electrons from NADH, via FMN and iron-sulfur (Fe-S) centers, to quinones in the respiratory chain. The immediate electron acceptor for the enzyme in this species is believed to be ubiquinone. Couples the redox reaction to proton translocation (for every two electrons transferred, four hydrogen ions are translocated across the cytoplasmic membrane), and thus conserves the redox energy in a proton gradient.</text>
</comment>
<comment type="catalytic activity">
    <reaction evidence="1">
        <text>a quinone + NADH + 5 H(+)(in) = a quinol + NAD(+) + 4 H(+)(out)</text>
        <dbReference type="Rhea" id="RHEA:57888"/>
        <dbReference type="ChEBI" id="CHEBI:15378"/>
        <dbReference type="ChEBI" id="CHEBI:24646"/>
        <dbReference type="ChEBI" id="CHEBI:57540"/>
        <dbReference type="ChEBI" id="CHEBI:57945"/>
        <dbReference type="ChEBI" id="CHEBI:132124"/>
    </reaction>
</comment>
<comment type="subunit">
    <text evidence="1">NDH-1 is composed of 13 different subunits. Subunits NuoA, H, J, K, L, M, N constitute the membrane sector of the complex.</text>
</comment>
<comment type="subcellular location">
    <subcellularLocation>
        <location evidence="1">Cell inner membrane</location>
        <topology evidence="1">Multi-pass membrane protein</topology>
    </subcellularLocation>
</comment>
<comment type="similarity">
    <text evidence="1">Belongs to the complex I subunit 3 family.</text>
</comment>
<organism>
    <name type="scientific">Pseudomonas paraeruginosa (strain DSM 24068 / PA7)</name>
    <name type="common">Pseudomonas aeruginosa (strain PA7)</name>
    <dbReference type="NCBI Taxonomy" id="381754"/>
    <lineage>
        <taxon>Bacteria</taxon>
        <taxon>Pseudomonadati</taxon>
        <taxon>Pseudomonadota</taxon>
        <taxon>Gammaproteobacteria</taxon>
        <taxon>Pseudomonadales</taxon>
        <taxon>Pseudomonadaceae</taxon>
        <taxon>Pseudomonas</taxon>
        <taxon>Pseudomonas paraeruginosa</taxon>
    </lineage>
</organism>
<reference key="1">
    <citation type="submission" date="2007-06" db="EMBL/GenBank/DDBJ databases">
        <authorList>
            <person name="Dodson R.J."/>
            <person name="Harkins D."/>
            <person name="Paulsen I.T."/>
        </authorList>
    </citation>
    <scope>NUCLEOTIDE SEQUENCE [LARGE SCALE GENOMIC DNA]</scope>
    <source>
        <strain>DSM 24068 / PA7</strain>
    </source>
</reference>
<sequence length="137" mass="14994">MPNPAELAAHHWGFAAFLLGVVGLLAFMLGVSALLGSKAFGRSKNEPFESGIVPTGGARLRLSAKFYLVAMLFVIFDVEALFLFAWSVSVRESGWAGLIEATIFIAILLAGLVYLWRIGALDWAPESRRKRQAKLKQ</sequence>
<proteinExistence type="inferred from homology"/>
<feature type="chain" id="PRO_0000362734" description="NADH-quinone oxidoreductase subunit A 1">
    <location>
        <begin position="1"/>
        <end position="137"/>
    </location>
</feature>
<feature type="transmembrane region" description="Helical" evidence="1">
    <location>
        <begin position="14"/>
        <end position="34"/>
    </location>
</feature>
<feature type="transmembrane region" description="Helical" evidence="1">
    <location>
        <begin position="66"/>
        <end position="86"/>
    </location>
</feature>
<feature type="transmembrane region" description="Helical" evidence="1">
    <location>
        <begin position="95"/>
        <end position="115"/>
    </location>
</feature>
<evidence type="ECO:0000255" key="1">
    <source>
        <dbReference type="HAMAP-Rule" id="MF_01394"/>
    </source>
</evidence>